<sequence length="228" mass="25929">MLHRKPYSETSLLVDLFTEESGRLTVLAKGARAKRSALKSVLQPFTPLLLRWTGKSSLKILTKAEPAAIALPLQQTALFSGFYVNELITRVIEPETPNPQLFQDYLHCLTSLAVSQNFVEPALREFEFKLLNILGYGVDFLHCAGSGEPVDENMTYRYREEKGFIASLIKDNLTFFGRELIAFERQDFSEKSVLQAAKRFTRVALKPYLGNKPLKSRELFTQTILHLK</sequence>
<evidence type="ECO:0000255" key="1">
    <source>
        <dbReference type="HAMAP-Rule" id="MF_00201"/>
    </source>
</evidence>
<protein>
    <recommendedName>
        <fullName evidence="1">DNA repair protein RecO</fullName>
    </recommendedName>
    <alternativeName>
        <fullName evidence="1">Recombination protein O</fullName>
    </alternativeName>
</protein>
<comment type="function">
    <text evidence="1">Involved in DNA repair and RecF pathway recombination.</text>
</comment>
<comment type="similarity">
    <text evidence="1">Belongs to the RecO family.</text>
</comment>
<reference key="1">
    <citation type="journal article" date="2004" name="Nat. Biotechnol.">
        <title>The genome sequence of the capnophilic rumen bacterium Mannheimia succiniciproducens.</title>
        <authorList>
            <person name="Hong S.H."/>
            <person name="Kim J.S."/>
            <person name="Lee S.Y."/>
            <person name="In Y.H."/>
            <person name="Choi S.S."/>
            <person name="Rih J.-K."/>
            <person name="Kim C.H."/>
            <person name="Jeong H."/>
            <person name="Hur C.G."/>
            <person name="Kim J.J."/>
        </authorList>
    </citation>
    <scope>NUCLEOTIDE SEQUENCE [LARGE SCALE GENOMIC DNA]</scope>
    <source>
        <strain>KCTC 0769BP / MBEL55E</strain>
    </source>
</reference>
<proteinExistence type="inferred from homology"/>
<name>RECO_MANSM</name>
<organism>
    <name type="scientific">Mannheimia succiniciproducens (strain KCTC 0769BP / MBEL55E)</name>
    <dbReference type="NCBI Taxonomy" id="221988"/>
    <lineage>
        <taxon>Bacteria</taxon>
        <taxon>Pseudomonadati</taxon>
        <taxon>Pseudomonadota</taxon>
        <taxon>Gammaproteobacteria</taxon>
        <taxon>Pasteurellales</taxon>
        <taxon>Pasteurellaceae</taxon>
        <taxon>Basfia</taxon>
    </lineage>
</organism>
<feature type="chain" id="PRO_0000227044" description="DNA repair protein RecO">
    <location>
        <begin position="1"/>
        <end position="228"/>
    </location>
</feature>
<dbReference type="EMBL" id="AE016827">
    <property type="protein sequence ID" value="AAU36846.1"/>
    <property type="molecule type" value="Genomic_DNA"/>
</dbReference>
<dbReference type="SMR" id="Q65W14"/>
<dbReference type="STRING" id="221988.MS0239"/>
<dbReference type="KEGG" id="msu:MS0239"/>
<dbReference type="eggNOG" id="COG1381">
    <property type="taxonomic scope" value="Bacteria"/>
</dbReference>
<dbReference type="HOGENOM" id="CLU_066645_1_0_6"/>
<dbReference type="Proteomes" id="UP000000607">
    <property type="component" value="Chromosome"/>
</dbReference>
<dbReference type="GO" id="GO:0043590">
    <property type="term" value="C:bacterial nucleoid"/>
    <property type="evidence" value="ECO:0007669"/>
    <property type="project" value="TreeGrafter"/>
</dbReference>
<dbReference type="GO" id="GO:0006310">
    <property type="term" value="P:DNA recombination"/>
    <property type="evidence" value="ECO:0007669"/>
    <property type="project" value="UniProtKB-UniRule"/>
</dbReference>
<dbReference type="GO" id="GO:0006302">
    <property type="term" value="P:double-strand break repair"/>
    <property type="evidence" value="ECO:0007669"/>
    <property type="project" value="TreeGrafter"/>
</dbReference>
<dbReference type="Gene3D" id="2.40.50.140">
    <property type="entry name" value="Nucleic acid-binding proteins"/>
    <property type="match status" value="1"/>
</dbReference>
<dbReference type="Gene3D" id="1.20.1440.120">
    <property type="entry name" value="Recombination protein O, C-terminal domain"/>
    <property type="match status" value="1"/>
</dbReference>
<dbReference type="HAMAP" id="MF_00201">
    <property type="entry name" value="RecO"/>
    <property type="match status" value="1"/>
</dbReference>
<dbReference type="InterPro" id="IPR037278">
    <property type="entry name" value="ARFGAP/RecO"/>
</dbReference>
<dbReference type="InterPro" id="IPR022572">
    <property type="entry name" value="DNA_rep/recomb_RecO_N"/>
</dbReference>
<dbReference type="InterPro" id="IPR012340">
    <property type="entry name" value="NA-bd_OB-fold"/>
</dbReference>
<dbReference type="InterPro" id="IPR003717">
    <property type="entry name" value="RecO"/>
</dbReference>
<dbReference type="InterPro" id="IPR042242">
    <property type="entry name" value="RecO_C"/>
</dbReference>
<dbReference type="NCBIfam" id="TIGR00613">
    <property type="entry name" value="reco"/>
    <property type="match status" value="1"/>
</dbReference>
<dbReference type="PANTHER" id="PTHR33991">
    <property type="entry name" value="DNA REPAIR PROTEIN RECO"/>
    <property type="match status" value="1"/>
</dbReference>
<dbReference type="PANTHER" id="PTHR33991:SF1">
    <property type="entry name" value="DNA REPAIR PROTEIN RECO"/>
    <property type="match status" value="1"/>
</dbReference>
<dbReference type="Pfam" id="PF02565">
    <property type="entry name" value="RecO_C"/>
    <property type="match status" value="1"/>
</dbReference>
<dbReference type="Pfam" id="PF11967">
    <property type="entry name" value="RecO_N"/>
    <property type="match status" value="1"/>
</dbReference>
<dbReference type="SUPFAM" id="SSF57863">
    <property type="entry name" value="ArfGap/RecO-like zinc finger"/>
    <property type="match status" value="1"/>
</dbReference>
<dbReference type="SUPFAM" id="SSF50249">
    <property type="entry name" value="Nucleic acid-binding proteins"/>
    <property type="match status" value="1"/>
</dbReference>
<keyword id="KW-0227">DNA damage</keyword>
<keyword id="KW-0233">DNA recombination</keyword>
<keyword id="KW-0234">DNA repair</keyword>
<gene>
    <name evidence="1" type="primary">recO</name>
    <name type="ordered locus">MS0239</name>
</gene>
<accession>Q65W14</accession>